<comment type="similarity">
    <text evidence="1">Belongs to the UPF0125 (RnfH) family.</text>
</comment>
<reference key="1">
    <citation type="journal article" date="2014" name="Stand. Genomic Sci.">
        <title>Complete genome sequence of Burkholderia phymatum STM815(T), a broad host range and efficient nitrogen-fixing symbiont of Mimosa species.</title>
        <authorList>
            <person name="Moulin L."/>
            <person name="Klonowska A."/>
            <person name="Caroline B."/>
            <person name="Booth K."/>
            <person name="Vriezen J.A."/>
            <person name="Melkonian R."/>
            <person name="James E.K."/>
            <person name="Young J.P."/>
            <person name="Bena G."/>
            <person name="Hauser L."/>
            <person name="Land M."/>
            <person name="Kyrpides N."/>
            <person name="Bruce D."/>
            <person name="Chain P."/>
            <person name="Copeland A."/>
            <person name="Pitluck S."/>
            <person name="Woyke T."/>
            <person name="Lizotte-Waniewski M."/>
            <person name="Bristow J."/>
            <person name="Riley M."/>
        </authorList>
    </citation>
    <scope>NUCLEOTIDE SEQUENCE [LARGE SCALE GENOMIC DNA]</scope>
    <source>
        <strain>DSM 17167 / CIP 108236 / LMG 21445 / STM815</strain>
    </source>
</reference>
<organism>
    <name type="scientific">Paraburkholderia phymatum (strain DSM 17167 / CIP 108236 / LMG 21445 / STM815)</name>
    <name type="common">Burkholderia phymatum</name>
    <dbReference type="NCBI Taxonomy" id="391038"/>
    <lineage>
        <taxon>Bacteria</taxon>
        <taxon>Pseudomonadati</taxon>
        <taxon>Pseudomonadota</taxon>
        <taxon>Betaproteobacteria</taxon>
        <taxon>Burkholderiales</taxon>
        <taxon>Burkholderiaceae</taxon>
        <taxon>Paraburkholderia</taxon>
    </lineage>
</organism>
<sequence length="110" mass="12398">MSAHLTVQVCYALPGEQTLIQLQLPPGVTLRQAIDASGVLTRHPEIDLTKHKTGVYGKLKPLDAVLADHDRVEIYRPLIVDPKLARQRRVEKSRQEGSVEGRKWLPKDSR</sequence>
<keyword id="KW-1185">Reference proteome</keyword>
<evidence type="ECO:0000255" key="1">
    <source>
        <dbReference type="HAMAP-Rule" id="MF_00460"/>
    </source>
</evidence>
<evidence type="ECO:0000256" key="2">
    <source>
        <dbReference type="SAM" id="MobiDB-lite"/>
    </source>
</evidence>
<gene>
    <name evidence="1" type="primary">rnfH</name>
    <name type="ordered locus">Bphy_1316</name>
</gene>
<name>RNFH_PARP8</name>
<accession>B2JIA4</accession>
<protein>
    <recommendedName>
        <fullName evidence="1">Protein RnfH</fullName>
    </recommendedName>
</protein>
<proteinExistence type="inferred from homology"/>
<dbReference type="EMBL" id="CP001043">
    <property type="protein sequence ID" value="ACC70498.1"/>
    <property type="molecule type" value="Genomic_DNA"/>
</dbReference>
<dbReference type="RefSeq" id="WP_012400712.1">
    <property type="nucleotide sequence ID" value="NC_010622.1"/>
</dbReference>
<dbReference type="SMR" id="B2JIA4"/>
<dbReference type="STRING" id="391038.Bphy_1316"/>
<dbReference type="KEGG" id="bph:Bphy_1316"/>
<dbReference type="eggNOG" id="COG2914">
    <property type="taxonomic scope" value="Bacteria"/>
</dbReference>
<dbReference type="HOGENOM" id="CLU_150721_1_0_4"/>
<dbReference type="OrthoDB" id="9796575at2"/>
<dbReference type="Proteomes" id="UP000001192">
    <property type="component" value="Chromosome 1"/>
</dbReference>
<dbReference type="Gene3D" id="3.10.20.280">
    <property type="entry name" value="RnfH-like"/>
    <property type="match status" value="1"/>
</dbReference>
<dbReference type="HAMAP" id="MF_00460">
    <property type="entry name" value="UPF0125_RnfH"/>
    <property type="match status" value="1"/>
</dbReference>
<dbReference type="InterPro" id="IPR016155">
    <property type="entry name" value="Mopterin_synth/thiamin_S_b"/>
</dbReference>
<dbReference type="InterPro" id="IPR005346">
    <property type="entry name" value="RnfH"/>
</dbReference>
<dbReference type="InterPro" id="IPR037021">
    <property type="entry name" value="RnfH_sf"/>
</dbReference>
<dbReference type="NCBIfam" id="NF002490">
    <property type="entry name" value="PRK01777.1"/>
    <property type="match status" value="1"/>
</dbReference>
<dbReference type="PANTHER" id="PTHR37483">
    <property type="entry name" value="UPF0125 PROTEIN RATB"/>
    <property type="match status" value="1"/>
</dbReference>
<dbReference type="PANTHER" id="PTHR37483:SF1">
    <property type="entry name" value="UPF0125 PROTEIN RATB"/>
    <property type="match status" value="1"/>
</dbReference>
<dbReference type="Pfam" id="PF03658">
    <property type="entry name" value="Ub-RnfH"/>
    <property type="match status" value="1"/>
</dbReference>
<dbReference type="SUPFAM" id="SSF54285">
    <property type="entry name" value="MoaD/ThiS"/>
    <property type="match status" value="1"/>
</dbReference>
<feature type="chain" id="PRO_1000200169" description="Protein RnfH">
    <location>
        <begin position="1"/>
        <end position="110"/>
    </location>
</feature>
<feature type="region of interest" description="Disordered" evidence="2">
    <location>
        <begin position="86"/>
        <end position="110"/>
    </location>
</feature>
<feature type="compositionally biased region" description="Basic and acidic residues" evidence="2">
    <location>
        <begin position="88"/>
        <end position="110"/>
    </location>
</feature>